<organism>
    <name type="scientific">Bifidobacterium longum (strain NCC 2705)</name>
    <dbReference type="NCBI Taxonomy" id="206672"/>
    <lineage>
        <taxon>Bacteria</taxon>
        <taxon>Bacillati</taxon>
        <taxon>Actinomycetota</taxon>
        <taxon>Actinomycetes</taxon>
        <taxon>Bifidobacteriales</taxon>
        <taxon>Bifidobacteriaceae</taxon>
        <taxon>Bifidobacterium</taxon>
    </lineage>
</organism>
<proteinExistence type="evidence at protein level"/>
<comment type="function">
    <text>Histone-like DNA-binding protein which is capable of wrapping DNA to stabilize it, and thus to prevent its denaturation under extreme environmental conditions.</text>
</comment>
<comment type="subunit">
    <text>Homodimer.</text>
</comment>
<comment type="similarity">
    <text evidence="2">Belongs to the bacterial histone-like protein family.</text>
</comment>
<name>DBH1_BIFLO</name>
<gene>
    <name type="primary">hup</name>
    <name type="ordered locus">BL1798</name>
</gene>
<dbReference type="EMBL" id="AE014295">
    <property type="protein sequence ID" value="AAN25581.1"/>
    <property type="molecule type" value="Genomic_DNA"/>
</dbReference>
<dbReference type="PIR" id="A43768">
    <property type="entry name" value="A43768"/>
</dbReference>
<dbReference type="RefSeq" id="NP_696945.1">
    <property type="nucleotide sequence ID" value="NC_004307.2"/>
</dbReference>
<dbReference type="RefSeq" id="WP_007053170.1">
    <property type="nucleotide sequence ID" value="NC_004307.2"/>
</dbReference>
<dbReference type="SMR" id="P17615"/>
<dbReference type="STRING" id="206672.BL1798"/>
<dbReference type="EnsemblBacteria" id="AAN25581">
    <property type="protein sequence ID" value="AAN25581"/>
    <property type="gene ID" value="BL1798"/>
</dbReference>
<dbReference type="KEGG" id="blo:BL1798"/>
<dbReference type="PATRIC" id="fig|206672.9.peg.1852"/>
<dbReference type="HOGENOM" id="CLU_105066_3_1_11"/>
<dbReference type="OrthoDB" id="9799835at2"/>
<dbReference type="PhylomeDB" id="P17615"/>
<dbReference type="Proteomes" id="UP000000439">
    <property type="component" value="Chromosome"/>
</dbReference>
<dbReference type="GO" id="GO:0005829">
    <property type="term" value="C:cytosol"/>
    <property type="evidence" value="ECO:0007669"/>
    <property type="project" value="TreeGrafter"/>
</dbReference>
<dbReference type="GO" id="GO:0003677">
    <property type="term" value="F:DNA binding"/>
    <property type="evidence" value="ECO:0007669"/>
    <property type="project" value="UniProtKB-KW"/>
</dbReference>
<dbReference type="GO" id="GO:0030527">
    <property type="term" value="F:structural constituent of chromatin"/>
    <property type="evidence" value="ECO:0007669"/>
    <property type="project" value="InterPro"/>
</dbReference>
<dbReference type="GO" id="GO:0030261">
    <property type="term" value="P:chromosome condensation"/>
    <property type="evidence" value="ECO:0007669"/>
    <property type="project" value="UniProtKB-KW"/>
</dbReference>
<dbReference type="CDD" id="cd14435">
    <property type="entry name" value="SPO1_TF1_like"/>
    <property type="match status" value="1"/>
</dbReference>
<dbReference type="Gene3D" id="4.10.520.10">
    <property type="entry name" value="IHF-like DNA-binding proteins"/>
    <property type="match status" value="1"/>
</dbReference>
<dbReference type="InterPro" id="IPR000119">
    <property type="entry name" value="Hist_DNA-bd"/>
</dbReference>
<dbReference type="InterPro" id="IPR010992">
    <property type="entry name" value="IHF-like_DNA-bd_dom_sf"/>
</dbReference>
<dbReference type="PANTHER" id="PTHR33175">
    <property type="entry name" value="DNA-BINDING PROTEIN HU"/>
    <property type="match status" value="1"/>
</dbReference>
<dbReference type="PANTHER" id="PTHR33175:SF3">
    <property type="entry name" value="DNA-BINDING PROTEIN HU-BETA"/>
    <property type="match status" value="1"/>
</dbReference>
<dbReference type="Pfam" id="PF00216">
    <property type="entry name" value="Bac_DNA_binding"/>
    <property type="match status" value="1"/>
</dbReference>
<dbReference type="SMART" id="SM00411">
    <property type="entry name" value="BHL"/>
    <property type="match status" value="1"/>
</dbReference>
<dbReference type="SUPFAM" id="SSF47729">
    <property type="entry name" value="IHF-like DNA-binding proteins"/>
    <property type="match status" value="1"/>
</dbReference>
<protein>
    <recommendedName>
        <fullName>DNA-binding protein HB1</fullName>
    </recommendedName>
</protein>
<reference key="1">
    <citation type="journal article" date="2002" name="Proc. Natl. Acad. Sci. U.S.A.">
        <title>The genome sequence of Bifidobacterium longum reflects its adaptation to the human gastrointestinal tract.</title>
        <authorList>
            <person name="Schell M.A."/>
            <person name="Karmirantzou M."/>
            <person name="Snel B."/>
            <person name="Vilanova D."/>
            <person name="Berger B."/>
            <person name="Pessi G."/>
            <person name="Zwahlen M.-C."/>
            <person name="Desiere F."/>
            <person name="Bork P."/>
            <person name="Delley M."/>
            <person name="Pridmore R.D."/>
            <person name="Arigoni F."/>
        </authorList>
    </citation>
    <scope>NUCLEOTIDE SEQUENCE [LARGE SCALE GENOMIC DNA]</scope>
    <source>
        <strain>NCC 2705</strain>
    </source>
</reference>
<reference key="2">
    <citation type="journal article" date="1990" name="Biochimie">
        <title>Characterization of HU-like protein from Bifidobacterium longum.</title>
        <authorList>
            <person name="Goshima N."/>
            <person name="Kano Y."/>
            <person name="Imamoto F."/>
        </authorList>
    </citation>
    <scope>PROTEIN SEQUENCE OF 2-28</scope>
    <source>
        <strain>ATCC 15703 / DSM 20083 / NCTC 11814 / E194a</strain>
    </source>
</reference>
<evidence type="ECO:0000269" key="1">
    <source>
    </source>
</evidence>
<evidence type="ECO:0000305" key="2"/>
<keyword id="KW-0903">Direct protein sequencing</keyword>
<keyword id="KW-0226">DNA condensation</keyword>
<keyword id="KW-0238">DNA-binding</keyword>
<keyword id="KW-1185">Reference proteome</keyword>
<sequence>MAYNKSDLVSKIAQKSNLTKAQAEAAVNAFQDVFVEAMKSGEGLKLTGLFSAERVKRAARTGRNPRTGEQIDIPASYGVRISAGSLLKKAVTE</sequence>
<feature type="initiator methionine" description="Removed" evidence="1">
    <location>
        <position position="1"/>
    </location>
</feature>
<feature type="chain" id="PRO_0000104916" description="DNA-binding protein HB1">
    <location>
        <begin position="2"/>
        <end position="93"/>
    </location>
</feature>
<accession>P17615</accession>